<proteinExistence type="inferred from homology"/>
<reference key="1">
    <citation type="journal article" date="2005" name="Nature">
        <title>The genome of the social amoeba Dictyostelium discoideum.</title>
        <authorList>
            <person name="Eichinger L."/>
            <person name="Pachebat J.A."/>
            <person name="Gloeckner G."/>
            <person name="Rajandream M.A."/>
            <person name="Sucgang R."/>
            <person name="Berriman M."/>
            <person name="Song J."/>
            <person name="Olsen R."/>
            <person name="Szafranski K."/>
            <person name="Xu Q."/>
            <person name="Tunggal B."/>
            <person name="Kummerfeld S."/>
            <person name="Madera M."/>
            <person name="Konfortov B.A."/>
            <person name="Rivero F."/>
            <person name="Bankier A.T."/>
            <person name="Lehmann R."/>
            <person name="Hamlin N."/>
            <person name="Davies R."/>
            <person name="Gaudet P."/>
            <person name="Fey P."/>
            <person name="Pilcher K."/>
            <person name="Chen G."/>
            <person name="Saunders D."/>
            <person name="Sodergren E.J."/>
            <person name="Davis P."/>
            <person name="Kerhornou A."/>
            <person name="Nie X."/>
            <person name="Hall N."/>
            <person name="Anjard C."/>
            <person name="Hemphill L."/>
            <person name="Bason N."/>
            <person name="Farbrother P."/>
            <person name="Desany B."/>
            <person name="Just E."/>
            <person name="Morio T."/>
            <person name="Rost R."/>
            <person name="Churcher C.M."/>
            <person name="Cooper J."/>
            <person name="Haydock S."/>
            <person name="van Driessche N."/>
            <person name="Cronin A."/>
            <person name="Goodhead I."/>
            <person name="Muzny D.M."/>
            <person name="Mourier T."/>
            <person name="Pain A."/>
            <person name="Lu M."/>
            <person name="Harper D."/>
            <person name="Lindsay R."/>
            <person name="Hauser H."/>
            <person name="James K.D."/>
            <person name="Quiles M."/>
            <person name="Madan Babu M."/>
            <person name="Saito T."/>
            <person name="Buchrieser C."/>
            <person name="Wardroper A."/>
            <person name="Felder M."/>
            <person name="Thangavelu M."/>
            <person name="Johnson D."/>
            <person name="Knights A."/>
            <person name="Loulseged H."/>
            <person name="Mungall K.L."/>
            <person name="Oliver K."/>
            <person name="Price C."/>
            <person name="Quail M.A."/>
            <person name="Urushihara H."/>
            <person name="Hernandez J."/>
            <person name="Rabbinowitsch E."/>
            <person name="Steffen D."/>
            <person name="Sanders M."/>
            <person name="Ma J."/>
            <person name="Kohara Y."/>
            <person name="Sharp S."/>
            <person name="Simmonds M.N."/>
            <person name="Spiegler S."/>
            <person name="Tivey A."/>
            <person name="Sugano S."/>
            <person name="White B."/>
            <person name="Walker D."/>
            <person name="Woodward J.R."/>
            <person name="Winckler T."/>
            <person name="Tanaka Y."/>
            <person name="Shaulsky G."/>
            <person name="Schleicher M."/>
            <person name="Weinstock G.M."/>
            <person name="Rosenthal A."/>
            <person name="Cox E.C."/>
            <person name="Chisholm R.L."/>
            <person name="Gibbs R.A."/>
            <person name="Loomis W.F."/>
            <person name="Platzer M."/>
            <person name="Kay R.R."/>
            <person name="Williams J.G."/>
            <person name="Dear P.H."/>
            <person name="Noegel A.A."/>
            <person name="Barrell B.G."/>
            <person name="Kuspa A."/>
        </authorList>
    </citation>
    <scope>NUCLEOTIDE SEQUENCE [LARGE SCALE GENOMIC DNA]</scope>
    <source>
        <strain>AX4</strain>
    </source>
</reference>
<gene>
    <name type="primary">aco1</name>
    <name type="synonym">acnA</name>
    <name type="ORF">DDB_G0279159</name>
</gene>
<organism>
    <name type="scientific">Dictyostelium discoideum</name>
    <name type="common">Social amoeba</name>
    <dbReference type="NCBI Taxonomy" id="44689"/>
    <lineage>
        <taxon>Eukaryota</taxon>
        <taxon>Amoebozoa</taxon>
        <taxon>Evosea</taxon>
        <taxon>Eumycetozoa</taxon>
        <taxon>Dictyostelia</taxon>
        <taxon>Dictyosteliales</taxon>
        <taxon>Dictyosteliaceae</taxon>
        <taxon>Dictyostelium</taxon>
    </lineage>
</organism>
<protein>
    <recommendedName>
        <fullName evidence="3">Probable cytoplasmic aconitate hydratase</fullName>
        <shortName>Aconitase</shortName>
        <ecNumber evidence="2">4.2.1.3</ecNumber>
    </recommendedName>
    <alternativeName>
        <fullName>Citrate hydro-lyase</fullName>
    </alternativeName>
</protein>
<sequence length="894" mass="97991">MTTNNPFDKVKDVLKSQDQTYNFYNLSKLQDPRIEKLPYSIRILLESAVRNCDNFEVHEKDVENILNWENTANKVEIPFKPARVLLQDFTGVPAVVDLAAMRDAMKRLGGDPAKINPLVPVDLVIDHSVQVDVSRTVDALEQNQKIEFHRNHERFSFLKWGAQAFDGLFIAPPGSGIVHQVNLEYIAREVMNGTGNLLYPDSVVGTDSHTTMINGLGVCGWGVGGIEAEAVMLGQPMSMVLPEVVGYKFVGKLPDIATATDLVLTVTNELRKKGVVGKFVEFYGEGVSTLSVQDRATISNMAPEYGATMGFFPADENTIDYLASTGRSNTKIEYIKNYLSSQGLMCNYKSQSHPIFTTTMELDLSTVVPSLSGPKRPHDRISLNSMKQDFNSCLSSPVGFKGFGLTADQIQKKATFTFKDKQYTIGHGAVTIAAITSCTNTSNPSVMLGAGLLAKNAVEHGLEVAPYIKTSLSPGSGVVTEYFSHSGLQEPLNKLGFDLTGYGCMTCIGNSGELAEPLAEAITKEDLVVAGVLSGNRNFEGRIHPLLRANYLASPPLVVAYALAGTVDIDFETTPLGVSKKTGQPVFLRDIWPSKDLIQQTIKSSVLPDMYERVYSNVNDGNKSWNELKVPTGLLYPWDEKSTYIHNPPFFKTMELTVSKRPAITNAYCLLNLGDSITTDHISPAGNINRKSSAARYLESKGVKPEDFNTYGSRRGNDEIMVRGTFANTRIVNKLAPAVGPQTTYVPTGELMFISDAAEKYQSEGHQLIVLAGSDYGSGSSRDWAAKGPYLQGIKCVIAISFERIHRSNLVGMGIIPLQFQPGQNASTLGLTGKEQFNIELPTDKSLIKTGQTVKVTTNCGKSFETILRFDTPIEVEYWANNGILSYVLRKLLH</sequence>
<evidence type="ECO:0000250" key="1"/>
<evidence type="ECO:0000250" key="2">
    <source>
        <dbReference type="UniProtKB" id="P21399"/>
    </source>
</evidence>
<evidence type="ECO:0000305" key="3"/>
<name>ACOHC_DICDI</name>
<keyword id="KW-0004">4Fe-4S</keyword>
<keyword id="KW-0963">Cytoplasm</keyword>
<keyword id="KW-0408">Iron</keyword>
<keyword id="KW-0411">Iron-sulfur</keyword>
<keyword id="KW-0456">Lyase</keyword>
<keyword id="KW-0479">Metal-binding</keyword>
<keyword id="KW-1185">Reference proteome</keyword>
<keyword id="KW-0816">Tricarboxylic acid cycle</keyword>
<dbReference type="EC" id="4.2.1.3" evidence="2"/>
<dbReference type="EMBL" id="AAFI02000028">
    <property type="protein sequence ID" value="EAL67861.1"/>
    <property type="molecule type" value="Genomic_DNA"/>
</dbReference>
<dbReference type="RefSeq" id="XP_641837.1">
    <property type="nucleotide sequence ID" value="XM_636745.1"/>
</dbReference>
<dbReference type="SMR" id="Q54X73"/>
<dbReference type="FunCoup" id="Q54X73">
    <property type="interactions" value="533"/>
</dbReference>
<dbReference type="STRING" id="44689.Q54X73"/>
<dbReference type="PaxDb" id="44689-DDB0229908"/>
<dbReference type="EnsemblProtists" id="EAL67861">
    <property type="protein sequence ID" value="EAL67861"/>
    <property type="gene ID" value="DDB_G0279159"/>
</dbReference>
<dbReference type="GeneID" id="8621900"/>
<dbReference type="KEGG" id="ddi:DDB_G0279159"/>
<dbReference type="dictyBase" id="DDB_G0279159">
    <property type="gene designation" value="aco1"/>
</dbReference>
<dbReference type="VEuPathDB" id="AmoebaDB:DDB_G0279159"/>
<dbReference type="eggNOG" id="KOG0452">
    <property type="taxonomic scope" value="Eukaryota"/>
</dbReference>
<dbReference type="HOGENOM" id="CLU_013476_2_1_1"/>
<dbReference type="InParanoid" id="Q54X73"/>
<dbReference type="OMA" id="NGGIMQY"/>
<dbReference type="PhylomeDB" id="Q54X73"/>
<dbReference type="Reactome" id="R-DDI-389542">
    <property type="pathway name" value="NADPH regeneration"/>
</dbReference>
<dbReference type="Reactome" id="R-DDI-917937">
    <property type="pathway name" value="Iron uptake and transport"/>
</dbReference>
<dbReference type="PRO" id="PR:Q54X73"/>
<dbReference type="Proteomes" id="UP000002195">
    <property type="component" value="Chromosome 3"/>
</dbReference>
<dbReference type="GO" id="GO:0005829">
    <property type="term" value="C:cytosol"/>
    <property type="evidence" value="ECO:0000250"/>
    <property type="project" value="UniProtKB"/>
</dbReference>
<dbReference type="GO" id="GO:0051539">
    <property type="term" value="F:4 iron, 4 sulfur cluster binding"/>
    <property type="evidence" value="ECO:0000318"/>
    <property type="project" value="GO_Central"/>
</dbReference>
<dbReference type="GO" id="GO:0003994">
    <property type="term" value="F:aconitate hydratase activity"/>
    <property type="evidence" value="ECO:0000318"/>
    <property type="project" value="GO_Central"/>
</dbReference>
<dbReference type="GO" id="GO:0030350">
    <property type="term" value="F:iron-responsive element binding"/>
    <property type="evidence" value="ECO:0000318"/>
    <property type="project" value="GO_Central"/>
</dbReference>
<dbReference type="GO" id="GO:0046872">
    <property type="term" value="F:metal ion binding"/>
    <property type="evidence" value="ECO:0007669"/>
    <property type="project" value="UniProtKB-KW"/>
</dbReference>
<dbReference type="GO" id="GO:0006879">
    <property type="term" value="P:intracellular iron ion homeostasis"/>
    <property type="evidence" value="ECO:0000318"/>
    <property type="project" value="GO_Central"/>
</dbReference>
<dbReference type="GO" id="GO:0006099">
    <property type="term" value="P:tricarboxylic acid cycle"/>
    <property type="evidence" value="ECO:0007669"/>
    <property type="project" value="UniProtKB-KW"/>
</dbReference>
<dbReference type="CDD" id="cd01586">
    <property type="entry name" value="AcnA_IRP"/>
    <property type="match status" value="1"/>
</dbReference>
<dbReference type="CDD" id="cd01580">
    <property type="entry name" value="AcnA_IRP_Swivel"/>
    <property type="match status" value="1"/>
</dbReference>
<dbReference type="FunFam" id="3.20.19.10:FF:000001">
    <property type="entry name" value="Aconitate hydratase"/>
    <property type="match status" value="1"/>
</dbReference>
<dbReference type="FunFam" id="3.30.499.10:FF:000002">
    <property type="entry name" value="Aconitate hydratase"/>
    <property type="match status" value="1"/>
</dbReference>
<dbReference type="FunFam" id="3.30.499.10:FF:000005">
    <property type="entry name" value="cytoplasmic aconitate hydratase"/>
    <property type="match status" value="1"/>
</dbReference>
<dbReference type="Gene3D" id="6.10.190.10">
    <property type="match status" value="1"/>
</dbReference>
<dbReference type="Gene3D" id="3.30.499.10">
    <property type="entry name" value="Aconitase, domain 3"/>
    <property type="match status" value="2"/>
</dbReference>
<dbReference type="Gene3D" id="3.20.19.10">
    <property type="entry name" value="Aconitase, domain 4"/>
    <property type="match status" value="1"/>
</dbReference>
<dbReference type="InterPro" id="IPR044137">
    <property type="entry name" value="AcnA_IRP_Swivel"/>
</dbReference>
<dbReference type="InterPro" id="IPR015931">
    <property type="entry name" value="Acnase/IPM_dHydase_lsu_aba_1/3"/>
</dbReference>
<dbReference type="InterPro" id="IPR001030">
    <property type="entry name" value="Acoase/IPM_deHydtase_lsu_aba"/>
</dbReference>
<dbReference type="InterPro" id="IPR015928">
    <property type="entry name" value="Aconitase/3IPM_dehydase_swvl"/>
</dbReference>
<dbReference type="InterPro" id="IPR006249">
    <property type="entry name" value="Aconitase/IRP2"/>
</dbReference>
<dbReference type="InterPro" id="IPR018136">
    <property type="entry name" value="Aconitase_4Fe-4S_BS"/>
</dbReference>
<dbReference type="InterPro" id="IPR036008">
    <property type="entry name" value="Aconitase_4Fe-4S_dom"/>
</dbReference>
<dbReference type="InterPro" id="IPR000573">
    <property type="entry name" value="AconitaseA/IPMdHydase_ssu_swvl"/>
</dbReference>
<dbReference type="NCBIfam" id="TIGR01341">
    <property type="entry name" value="aconitase_1"/>
    <property type="match status" value="1"/>
</dbReference>
<dbReference type="NCBIfam" id="NF006757">
    <property type="entry name" value="PRK09277.1"/>
    <property type="match status" value="1"/>
</dbReference>
<dbReference type="NCBIfam" id="NF009520">
    <property type="entry name" value="PRK12881.1"/>
    <property type="match status" value="1"/>
</dbReference>
<dbReference type="PANTHER" id="PTHR11670">
    <property type="entry name" value="ACONITASE/IRON-RESPONSIVE ELEMENT FAMILY MEMBER"/>
    <property type="match status" value="1"/>
</dbReference>
<dbReference type="Pfam" id="PF00330">
    <property type="entry name" value="Aconitase"/>
    <property type="match status" value="1"/>
</dbReference>
<dbReference type="Pfam" id="PF00694">
    <property type="entry name" value="Aconitase_C"/>
    <property type="match status" value="1"/>
</dbReference>
<dbReference type="PRINTS" id="PR00415">
    <property type="entry name" value="ACONITASE"/>
</dbReference>
<dbReference type="SUPFAM" id="SSF53732">
    <property type="entry name" value="Aconitase iron-sulfur domain"/>
    <property type="match status" value="1"/>
</dbReference>
<dbReference type="SUPFAM" id="SSF52016">
    <property type="entry name" value="LeuD/IlvD-like"/>
    <property type="match status" value="1"/>
</dbReference>
<dbReference type="PROSITE" id="PS00450">
    <property type="entry name" value="ACONITASE_1"/>
    <property type="match status" value="1"/>
</dbReference>
<dbReference type="PROSITE" id="PS01244">
    <property type="entry name" value="ACONITASE_2"/>
    <property type="match status" value="1"/>
</dbReference>
<comment type="function">
    <text evidence="2">Catalyzes the isomerization of citrate to isocitrate via cis-aconitate.</text>
</comment>
<comment type="catalytic activity">
    <reaction evidence="2">
        <text>citrate = D-threo-isocitrate</text>
        <dbReference type="Rhea" id="RHEA:10336"/>
        <dbReference type="ChEBI" id="CHEBI:15562"/>
        <dbReference type="ChEBI" id="CHEBI:16947"/>
        <dbReference type="EC" id="4.2.1.3"/>
    </reaction>
</comment>
<comment type="cofactor">
    <cofactor evidence="2">
        <name>[4Fe-4S] cluster</name>
        <dbReference type="ChEBI" id="CHEBI:49883"/>
    </cofactor>
    <text evidence="2">Binds 1 [4Fe-4S] cluster per subunit.</text>
</comment>
<comment type="subcellular location">
    <subcellularLocation>
        <location evidence="2">Cytoplasm</location>
        <location evidence="2">Cytosol</location>
    </subcellularLocation>
</comment>
<comment type="similarity">
    <text evidence="3">Belongs to the aconitase/IPM isomerase family.</text>
</comment>
<feature type="chain" id="PRO_0000328573" description="Probable cytoplasmic aconitate hydratase">
    <location>
        <begin position="1"/>
        <end position="894"/>
    </location>
</feature>
<feature type="binding site" evidence="1">
    <location>
        <position position="87"/>
    </location>
    <ligand>
        <name>substrate</name>
    </ligand>
</feature>
<feature type="binding site" evidence="1">
    <location>
        <begin position="207"/>
        <end position="209"/>
    </location>
    <ligand>
        <name>substrate</name>
    </ligand>
</feature>
<feature type="binding site" evidence="1">
    <location>
        <position position="438"/>
    </location>
    <ligand>
        <name>[4Fe-4S] cluster</name>
        <dbReference type="ChEBI" id="CHEBI:49883"/>
    </ligand>
</feature>
<feature type="binding site" evidence="1">
    <location>
        <position position="504"/>
    </location>
    <ligand>
        <name>[4Fe-4S] cluster</name>
        <dbReference type="ChEBI" id="CHEBI:49883"/>
    </ligand>
</feature>
<feature type="binding site" evidence="1">
    <location>
        <position position="507"/>
    </location>
    <ligand>
        <name>[4Fe-4S] cluster</name>
        <dbReference type="ChEBI" id="CHEBI:49883"/>
    </ligand>
</feature>
<feature type="binding site" evidence="1">
    <location>
        <position position="537"/>
    </location>
    <ligand>
        <name>substrate</name>
    </ligand>
</feature>
<feature type="binding site" evidence="1">
    <location>
        <position position="542"/>
    </location>
    <ligand>
        <name>substrate</name>
    </ligand>
</feature>
<feature type="binding site" evidence="1">
    <location>
        <begin position="781"/>
        <end position="782"/>
    </location>
    <ligand>
        <name>substrate</name>
    </ligand>
</feature>
<accession>Q54X73</accession>